<protein>
    <recommendedName>
        <fullName>Annexin A5</fullName>
    </recommendedName>
    <alternativeName>
        <fullName>Anchorin CII</fullName>
    </alternativeName>
    <alternativeName>
        <fullName>Annexin V</fullName>
    </alternativeName>
    <alternativeName>
        <fullName>Annexin-5</fullName>
    </alternativeName>
    <alternativeName>
        <fullName>Calphobindin I</fullName>
        <shortName>CPB-I</shortName>
    </alternativeName>
    <alternativeName>
        <fullName>Endonexin II</fullName>
    </alternativeName>
    <alternativeName>
        <fullName>Lipocortin V</fullName>
    </alternativeName>
    <alternativeName>
        <fullName>Placental anticoagulant protein 4</fullName>
        <shortName>PP4</shortName>
    </alternativeName>
    <alternativeName>
        <fullName>Placental anticoagulant protein I</fullName>
        <shortName>PAP-I</shortName>
    </alternativeName>
    <alternativeName>
        <fullName>Thromboplastin inhibitor</fullName>
    </alternativeName>
    <alternativeName>
        <fullName>Vascular anticoagulant-alpha</fullName>
        <shortName>VAC-alpha</shortName>
    </alternativeName>
</protein>
<sequence length="319" mass="35752">MATRGTVTDFPGFDGRADAEVLRKAMKGLGTDEDSILNLLTSRSNAQRQEIAQEFKTLFGRDLVDDLKSELTGKFEKLIVAMMKPSRLYDAYELKHALKGAGTDEKVLTEIIASRTPEELSAIKQVYEEEYGSNLEDDVVGDTSGYYQRMLVVLLQANRDPDTAIDDAQVELDAQALFQAGELKWGTDEEKFITIFGTRSVSHLRRVFDKYMTISGFQIEETIDRETSGNLEQLLLAVVKSIRSIPAYLAETLYYAMKGAGTDDHTLIRVVVSRSEIDLFNIRKEFRKNFATSLYSMIKGDTSGDYKKALLLLCGGEDD</sequence>
<keyword id="KW-0007">Acetylation</keyword>
<keyword id="KW-0041">Annexin</keyword>
<keyword id="KW-0094">Blood coagulation</keyword>
<keyword id="KW-0106">Calcium</keyword>
<keyword id="KW-0111">Calcium/phospholipid-binding</keyword>
<keyword id="KW-0903">Direct protein sequencing</keyword>
<keyword id="KW-0356">Hemostasis</keyword>
<keyword id="KW-1017">Isopeptide bond</keyword>
<keyword id="KW-0597">Phosphoprotein</keyword>
<keyword id="KW-1185">Reference proteome</keyword>
<keyword id="KW-0677">Repeat</keyword>
<keyword id="KW-0702">S-nitrosylation</keyword>
<keyword id="KW-0832">Ubl conjugation</keyword>
<evidence type="ECO:0000250" key="1"/>
<evidence type="ECO:0000250" key="2">
    <source>
        <dbReference type="UniProtKB" id="P08758"/>
    </source>
</evidence>
<evidence type="ECO:0000250" key="3">
    <source>
        <dbReference type="UniProtKB" id="P14668"/>
    </source>
</evidence>
<evidence type="ECO:0000255" key="4">
    <source>
        <dbReference type="PROSITE-ProRule" id="PRU01245"/>
    </source>
</evidence>
<evidence type="ECO:0000305" key="5"/>
<evidence type="ECO:0007744" key="6">
    <source>
    </source>
</evidence>
<evidence type="ECO:0007744" key="7">
    <source>
    </source>
</evidence>
<feature type="initiator methionine" description="Removed" evidence="3">
    <location>
        <position position="1"/>
    </location>
</feature>
<feature type="chain" id="PRO_0000067488" description="Annexin A5">
    <location>
        <begin position="2"/>
        <end position="319"/>
    </location>
</feature>
<feature type="repeat" description="Annexin 1" evidence="4">
    <location>
        <begin position="13"/>
        <end position="84"/>
    </location>
</feature>
<feature type="repeat" description="Annexin 2" evidence="4">
    <location>
        <begin position="85"/>
        <end position="156"/>
    </location>
</feature>
<feature type="repeat" description="Annexin 3" evidence="4">
    <location>
        <begin position="168"/>
        <end position="240"/>
    </location>
</feature>
<feature type="repeat" description="Annexin 4" evidence="4">
    <location>
        <begin position="244"/>
        <end position="315"/>
    </location>
</feature>
<feature type="short sequence motif" description="[IL]-x-C-x-x-[DE] motif" evidence="2">
    <location>
        <begin position="312"/>
        <end position="318"/>
    </location>
</feature>
<feature type="modified residue" description="N-acetylalanine" evidence="3">
    <location>
        <position position="2"/>
    </location>
</feature>
<feature type="modified residue" description="Phosphoserine" evidence="6">
    <location>
        <position position="35"/>
    </location>
</feature>
<feature type="modified residue" description="N6-acetyllysine" evidence="7">
    <location>
        <position position="68"/>
    </location>
</feature>
<feature type="modified residue" description="N6-acetyllysine" evidence="2">
    <location>
        <position position="74"/>
    </location>
</feature>
<feature type="modified residue" description="N6-acetyllysine" evidence="2">
    <location>
        <position position="77"/>
    </location>
</feature>
<feature type="modified residue" description="N6-acetyllysine" evidence="7">
    <location>
        <position position="95"/>
    </location>
</feature>
<feature type="modified residue" description="N6-acetyllysine" evidence="2">
    <location>
        <position position="99"/>
    </location>
</feature>
<feature type="modified residue" description="N6-succinyllysine" evidence="7">
    <location>
        <position position="288"/>
    </location>
</feature>
<feature type="cross-link" description="Glycyl lysine isopeptide (Lys-Gly) (interchain with G-Cter in SUMO1); alternate" evidence="2">
    <location>
        <position position="27"/>
    </location>
</feature>
<feature type="cross-link" description="Glycyl lysine isopeptide (Lys-Gly) (interchain with G-Cter in SUMO2); alternate" evidence="2">
    <location>
        <position position="27"/>
    </location>
</feature>
<feature type="sequence conflict" description="In Ref. 4; BAE28107." evidence="5" ref="4">
    <original>D</original>
    <variation>G</variation>
    <location>
        <position position="142"/>
    </location>
</feature>
<feature type="sequence conflict" description="In Ref. 5; AAH03716." evidence="5" ref="5">
    <original>A</original>
    <variation>G</variation>
    <location>
        <position position="157"/>
    </location>
</feature>
<feature type="sequence conflict" description="In Ref. 4; BAE31952." evidence="5" ref="4">
    <original>K</original>
    <variation>N</variation>
    <location>
        <position position="284"/>
    </location>
</feature>
<feature type="sequence conflict" description="In Ref. 4; BAE32026." evidence="5" ref="4">
    <original>G</original>
    <variation>S</variation>
    <location>
        <position position="300"/>
    </location>
</feature>
<accession>P48036</accession>
<accession>Q3U5Q1</accession>
<accession>Q3U5X4</accession>
<accession>Q3U8K1</accession>
<accession>Q3UGV0</accession>
<accession>Q99LA1</accession>
<name>ANXA5_MOUSE</name>
<proteinExistence type="evidence at protein level"/>
<comment type="function">
    <text>This protein is an anticoagulant protein that acts as an indirect inhibitor of the thromboplastin-specific complex, which is involved in the blood coagulation cascade.</text>
</comment>
<comment type="subunit">
    <text evidence="1">Monomer. Binds ATRX and EIF5B (By similarity).</text>
</comment>
<comment type="interaction">
    <interactant intactId="EBI-1184119">
        <id>P48036</id>
    </interactant>
    <interactant intactId="EBI-1633915">
        <id>Q08460</id>
        <label>Kcnma1</label>
    </interactant>
    <organismsDiffer>false</organismsDiffer>
    <experiments>4</experiments>
</comment>
<comment type="domain">
    <text>A pair of annexin repeats may form one binding site for calcium and phospholipid.</text>
</comment>
<comment type="domain">
    <text evidence="2">The [IL]-x-C-x-x-[DE] motif is a proposed target motif for cysteine S-nitrosylation mediated by the iNOS-S100A8/A9 transnitrosylase complex.</text>
</comment>
<comment type="PTM">
    <text evidence="2">S-nitrosylation is induced by interferon-gamma and oxidatively-modified low-densitity lipoprotein (LDL(ox)) possibly implicating the iNOS-S100A8/9 transnitrosylase complex.</text>
</comment>
<comment type="similarity">
    <text evidence="4 5">Belongs to the annexin family.</text>
</comment>
<organism>
    <name type="scientific">Mus musculus</name>
    <name type="common">Mouse</name>
    <dbReference type="NCBI Taxonomy" id="10090"/>
    <lineage>
        <taxon>Eukaryota</taxon>
        <taxon>Metazoa</taxon>
        <taxon>Chordata</taxon>
        <taxon>Craniata</taxon>
        <taxon>Vertebrata</taxon>
        <taxon>Euteleostomi</taxon>
        <taxon>Mammalia</taxon>
        <taxon>Eutheria</taxon>
        <taxon>Euarchontoglires</taxon>
        <taxon>Glires</taxon>
        <taxon>Rodentia</taxon>
        <taxon>Myomorpha</taxon>
        <taxon>Muroidea</taxon>
        <taxon>Muridae</taxon>
        <taxon>Murinae</taxon>
        <taxon>Mus</taxon>
        <taxon>Mus</taxon>
    </lineage>
</organism>
<reference key="1">
    <citation type="journal article" date="1996" name="Genomics">
        <title>Mouse annexin V chromosomal localization, cDNA sequence conservation, and molecular evolution.</title>
        <authorList>
            <person name="Rodriguez-Garcia M.I."/>
            <person name="Kozak C.A."/>
            <person name="Morgan R.O."/>
            <person name="Fernandez M.-P."/>
        </authorList>
    </citation>
    <scope>NUCLEOTIDE SEQUENCE [MRNA]</scope>
    <source>
        <tissue>Peritoneal cavity</tissue>
    </source>
</reference>
<reference key="2">
    <citation type="submission" date="1995-08" db="EMBL/GenBank/DDBJ databases">
        <authorList>
            <person name="Adachi T."/>
            <person name="Kojima K."/>
            <person name="Fukuoka S."/>
            <person name="Ogawa H."/>
            <person name="Matsumoto I."/>
        </authorList>
    </citation>
    <scope>NUCLEOTIDE SEQUENCE [MRNA]</scope>
</reference>
<reference key="3">
    <citation type="journal article" date="1999" name="Biochem. J.">
        <title>Mouse annexin V genomic organization includes an endogenous retrovirus.</title>
        <authorList>
            <person name="Rodriguez-Garcia M.I."/>
            <person name="Morgan R.O."/>
            <person name="Fernandez M.R."/>
            <person name="Bances P."/>
            <person name="Fernandez M.-P."/>
        </authorList>
    </citation>
    <scope>NUCLEOTIDE SEQUENCE [GENOMIC DNA]</scope>
    <source>
        <strain>129/SvJ</strain>
        <tissue>Liver</tissue>
    </source>
</reference>
<reference key="4">
    <citation type="journal article" date="2005" name="Science">
        <title>The transcriptional landscape of the mammalian genome.</title>
        <authorList>
            <person name="Carninci P."/>
            <person name="Kasukawa T."/>
            <person name="Katayama S."/>
            <person name="Gough J."/>
            <person name="Frith M.C."/>
            <person name="Maeda N."/>
            <person name="Oyama R."/>
            <person name="Ravasi T."/>
            <person name="Lenhard B."/>
            <person name="Wells C."/>
            <person name="Kodzius R."/>
            <person name="Shimokawa K."/>
            <person name="Bajic V.B."/>
            <person name="Brenner S.E."/>
            <person name="Batalov S."/>
            <person name="Forrest A.R."/>
            <person name="Zavolan M."/>
            <person name="Davis M.J."/>
            <person name="Wilming L.G."/>
            <person name="Aidinis V."/>
            <person name="Allen J.E."/>
            <person name="Ambesi-Impiombato A."/>
            <person name="Apweiler R."/>
            <person name="Aturaliya R.N."/>
            <person name="Bailey T.L."/>
            <person name="Bansal M."/>
            <person name="Baxter L."/>
            <person name="Beisel K.W."/>
            <person name="Bersano T."/>
            <person name="Bono H."/>
            <person name="Chalk A.M."/>
            <person name="Chiu K.P."/>
            <person name="Choudhary V."/>
            <person name="Christoffels A."/>
            <person name="Clutterbuck D.R."/>
            <person name="Crowe M.L."/>
            <person name="Dalla E."/>
            <person name="Dalrymple B.P."/>
            <person name="de Bono B."/>
            <person name="Della Gatta G."/>
            <person name="di Bernardo D."/>
            <person name="Down T."/>
            <person name="Engstrom P."/>
            <person name="Fagiolini M."/>
            <person name="Faulkner G."/>
            <person name="Fletcher C.F."/>
            <person name="Fukushima T."/>
            <person name="Furuno M."/>
            <person name="Futaki S."/>
            <person name="Gariboldi M."/>
            <person name="Georgii-Hemming P."/>
            <person name="Gingeras T.R."/>
            <person name="Gojobori T."/>
            <person name="Green R.E."/>
            <person name="Gustincich S."/>
            <person name="Harbers M."/>
            <person name="Hayashi Y."/>
            <person name="Hensch T.K."/>
            <person name="Hirokawa N."/>
            <person name="Hill D."/>
            <person name="Huminiecki L."/>
            <person name="Iacono M."/>
            <person name="Ikeo K."/>
            <person name="Iwama A."/>
            <person name="Ishikawa T."/>
            <person name="Jakt M."/>
            <person name="Kanapin A."/>
            <person name="Katoh M."/>
            <person name="Kawasawa Y."/>
            <person name="Kelso J."/>
            <person name="Kitamura H."/>
            <person name="Kitano H."/>
            <person name="Kollias G."/>
            <person name="Krishnan S.P."/>
            <person name="Kruger A."/>
            <person name="Kummerfeld S.K."/>
            <person name="Kurochkin I.V."/>
            <person name="Lareau L.F."/>
            <person name="Lazarevic D."/>
            <person name="Lipovich L."/>
            <person name="Liu J."/>
            <person name="Liuni S."/>
            <person name="McWilliam S."/>
            <person name="Madan Babu M."/>
            <person name="Madera M."/>
            <person name="Marchionni L."/>
            <person name="Matsuda H."/>
            <person name="Matsuzawa S."/>
            <person name="Miki H."/>
            <person name="Mignone F."/>
            <person name="Miyake S."/>
            <person name="Morris K."/>
            <person name="Mottagui-Tabar S."/>
            <person name="Mulder N."/>
            <person name="Nakano N."/>
            <person name="Nakauchi H."/>
            <person name="Ng P."/>
            <person name="Nilsson R."/>
            <person name="Nishiguchi S."/>
            <person name="Nishikawa S."/>
            <person name="Nori F."/>
            <person name="Ohara O."/>
            <person name="Okazaki Y."/>
            <person name="Orlando V."/>
            <person name="Pang K.C."/>
            <person name="Pavan W.J."/>
            <person name="Pavesi G."/>
            <person name="Pesole G."/>
            <person name="Petrovsky N."/>
            <person name="Piazza S."/>
            <person name="Reed J."/>
            <person name="Reid J.F."/>
            <person name="Ring B.Z."/>
            <person name="Ringwald M."/>
            <person name="Rost B."/>
            <person name="Ruan Y."/>
            <person name="Salzberg S.L."/>
            <person name="Sandelin A."/>
            <person name="Schneider C."/>
            <person name="Schoenbach C."/>
            <person name="Sekiguchi K."/>
            <person name="Semple C.A."/>
            <person name="Seno S."/>
            <person name="Sessa L."/>
            <person name="Sheng Y."/>
            <person name="Shibata Y."/>
            <person name="Shimada H."/>
            <person name="Shimada K."/>
            <person name="Silva D."/>
            <person name="Sinclair B."/>
            <person name="Sperling S."/>
            <person name="Stupka E."/>
            <person name="Sugiura K."/>
            <person name="Sultana R."/>
            <person name="Takenaka Y."/>
            <person name="Taki K."/>
            <person name="Tammoja K."/>
            <person name="Tan S.L."/>
            <person name="Tang S."/>
            <person name="Taylor M.S."/>
            <person name="Tegner J."/>
            <person name="Teichmann S.A."/>
            <person name="Ueda H.R."/>
            <person name="van Nimwegen E."/>
            <person name="Verardo R."/>
            <person name="Wei C.L."/>
            <person name="Yagi K."/>
            <person name="Yamanishi H."/>
            <person name="Zabarovsky E."/>
            <person name="Zhu S."/>
            <person name="Zimmer A."/>
            <person name="Hide W."/>
            <person name="Bult C."/>
            <person name="Grimmond S.M."/>
            <person name="Teasdale R.D."/>
            <person name="Liu E.T."/>
            <person name="Brusic V."/>
            <person name="Quackenbush J."/>
            <person name="Wahlestedt C."/>
            <person name="Mattick J.S."/>
            <person name="Hume D.A."/>
            <person name="Kai C."/>
            <person name="Sasaki D."/>
            <person name="Tomaru Y."/>
            <person name="Fukuda S."/>
            <person name="Kanamori-Katayama M."/>
            <person name="Suzuki M."/>
            <person name="Aoki J."/>
            <person name="Arakawa T."/>
            <person name="Iida J."/>
            <person name="Imamura K."/>
            <person name="Itoh M."/>
            <person name="Kato T."/>
            <person name="Kawaji H."/>
            <person name="Kawagashira N."/>
            <person name="Kawashima T."/>
            <person name="Kojima M."/>
            <person name="Kondo S."/>
            <person name="Konno H."/>
            <person name="Nakano K."/>
            <person name="Ninomiya N."/>
            <person name="Nishio T."/>
            <person name="Okada M."/>
            <person name="Plessy C."/>
            <person name="Shibata K."/>
            <person name="Shiraki T."/>
            <person name="Suzuki S."/>
            <person name="Tagami M."/>
            <person name="Waki K."/>
            <person name="Watahiki A."/>
            <person name="Okamura-Oho Y."/>
            <person name="Suzuki H."/>
            <person name="Kawai J."/>
            <person name="Hayashizaki Y."/>
        </authorList>
    </citation>
    <scope>NUCLEOTIDE SEQUENCE [LARGE SCALE MRNA]</scope>
    <source>
        <strain>C57BL/6J</strain>
        <tissue>Bone marrow</tissue>
    </source>
</reference>
<reference key="5">
    <citation type="journal article" date="2004" name="Genome Res.">
        <title>The status, quality, and expansion of the NIH full-length cDNA project: the Mammalian Gene Collection (MGC).</title>
        <authorList>
            <consortium name="The MGC Project Team"/>
        </authorList>
    </citation>
    <scope>NUCLEOTIDE SEQUENCE [LARGE SCALE MRNA]</scope>
    <source>
        <tissue>Mammary gland</tissue>
    </source>
</reference>
<reference key="6">
    <citation type="submission" date="2007-04" db="UniProtKB">
        <authorList>
            <person name="Lubec G."/>
            <person name="Klug S."/>
            <person name="Kang S.U."/>
        </authorList>
    </citation>
    <scope>PROTEIN SEQUENCE OF 28-43; 62-74; 116-124; 192-199; 226-240 AND 275-283</scope>
    <scope>IDENTIFICATION BY MASS SPECTROMETRY</scope>
    <source>
        <strain>C57BL/6J</strain>
        <tissue>Brain</tissue>
        <tissue>Hippocampus</tissue>
    </source>
</reference>
<reference key="7">
    <citation type="journal article" date="2010" name="Cell">
        <title>A tissue-specific atlas of mouse protein phosphorylation and expression.</title>
        <authorList>
            <person name="Huttlin E.L."/>
            <person name="Jedrychowski M.P."/>
            <person name="Elias J.E."/>
            <person name="Goswami T."/>
            <person name="Rad R."/>
            <person name="Beausoleil S.A."/>
            <person name="Villen J."/>
            <person name="Haas W."/>
            <person name="Sowa M.E."/>
            <person name="Gygi S.P."/>
        </authorList>
    </citation>
    <scope>PHOSPHORYLATION [LARGE SCALE ANALYSIS] AT SER-35</scope>
    <scope>IDENTIFICATION BY MASS SPECTROMETRY [LARGE SCALE ANALYSIS]</scope>
    <source>
        <tissue>Brain</tissue>
        <tissue>Brown adipose tissue</tissue>
        <tissue>Heart</tissue>
        <tissue>Kidney</tissue>
        <tissue>Liver</tissue>
        <tissue>Lung</tissue>
        <tissue>Pancreas</tissue>
        <tissue>Spleen</tissue>
        <tissue>Testis</tissue>
    </source>
</reference>
<reference key="8">
    <citation type="journal article" date="2013" name="Mol. Cell">
        <title>SIRT5-mediated lysine desuccinylation impacts diverse metabolic pathways.</title>
        <authorList>
            <person name="Park J."/>
            <person name="Chen Y."/>
            <person name="Tishkoff D.X."/>
            <person name="Peng C."/>
            <person name="Tan M."/>
            <person name="Dai L."/>
            <person name="Xie Z."/>
            <person name="Zhang Y."/>
            <person name="Zwaans B.M."/>
            <person name="Skinner M.E."/>
            <person name="Lombard D.B."/>
            <person name="Zhao Y."/>
        </authorList>
    </citation>
    <scope>ACETYLATION [LARGE SCALE ANALYSIS] AT LYS-68 AND LYS-95</scope>
    <scope>SUCCINYLATION [LARGE SCALE ANALYSIS] AT LYS-288</scope>
    <scope>IDENTIFICATION BY MASS SPECTROMETRY [LARGE SCALE ANALYSIS]</scope>
    <source>
        <tissue>Embryonic fibroblast</tissue>
    </source>
</reference>
<gene>
    <name type="primary">Anxa5</name>
    <name type="synonym">Anx5</name>
</gene>
<dbReference type="EMBL" id="U29396">
    <property type="protein sequence ID" value="AAC52530.1"/>
    <property type="molecule type" value="mRNA"/>
</dbReference>
<dbReference type="EMBL" id="D63423">
    <property type="protein sequence ID" value="BAA09728.1"/>
    <property type="molecule type" value="mRNA"/>
</dbReference>
<dbReference type="EMBL" id="AJ230108">
    <property type="protein sequence ID" value="CAA13092.1"/>
    <property type="molecule type" value="Genomic_DNA"/>
</dbReference>
<dbReference type="EMBL" id="AJ230110">
    <property type="protein sequence ID" value="CAA13092.1"/>
    <property type="status" value="JOINED"/>
    <property type="molecule type" value="Genomic_DNA"/>
</dbReference>
<dbReference type="EMBL" id="AJ230111">
    <property type="protein sequence ID" value="CAA13092.1"/>
    <property type="status" value="JOINED"/>
    <property type="molecule type" value="Genomic_DNA"/>
</dbReference>
<dbReference type="EMBL" id="AJ230114">
    <property type="protein sequence ID" value="CAA13092.1"/>
    <property type="status" value="JOINED"/>
    <property type="molecule type" value="Genomic_DNA"/>
</dbReference>
<dbReference type="EMBL" id="AJ230116">
    <property type="protein sequence ID" value="CAA13092.1"/>
    <property type="status" value="JOINED"/>
    <property type="molecule type" value="Genomic_DNA"/>
</dbReference>
<dbReference type="EMBL" id="AJ230118">
    <property type="protein sequence ID" value="CAA13092.1"/>
    <property type="status" value="JOINED"/>
    <property type="molecule type" value="Genomic_DNA"/>
</dbReference>
<dbReference type="EMBL" id="AJ230119">
    <property type="protein sequence ID" value="CAA13092.1"/>
    <property type="status" value="JOINED"/>
    <property type="molecule type" value="Genomic_DNA"/>
</dbReference>
<dbReference type="EMBL" id="AJ230120">
    <property type="protein sequence ID" value="CAA13092.1"/>
    <property type="status" value="JOINED"/>
    <property type="molecule type" value="Genomic_DNA"/>
</dbReference>
<dbReference type="EMBL" id="AJ230121">
    <property type="protein sequence ID" value="CAA13092.1"/>
    <property type="status" value="JOINED"/>
    <property type="molecule type" value="Genomic_DNA"/>
</dbReference>
<dbReference type="EMBL" id="AJ230122">
    <property type="protein sequence ID" value="CAA13092.1"/>
    <property type="status" value="JOINED"/>
    <property type="molecule type" value="Genomic_DNA"/>
</dbReference>
<dbReference type="EMBL" id="AJ230123">
    <property type="protein sequence ID" value="CAA13092.1"/>
    <property type="status" value="JOINED"/>
    <property type="molecule type" value="Genomic_DNA"/>
</dbReference>
<dbReference type="EMBL" id="AJ230124">
    <property type="protein sequence ID" value="CAA13092.1"/>
    <property type="status" value="JOINED"/>
    <property type="molecule type" value="Genomic_DNA"/>
</dbReference>
<dbReference type="EMBL" id="AK147740">
    <property type="protein sequence ID" value="BAE28107.1"/>
    <property type="molecule type" value="mRNA"/>
</dbReference>
<dbReference type="EMBL" id="AK152185">
    <property type="protein sequence ID" value="BAE31016.1"/>
    <property type="molecule type" value="mRNA"/>
</dbReference>
<dbReference type="EMBL" id="AK153388">
    <property type="protein sequence ID" value="BAE31952.1"/>
    <property type="molecule type" value="mRNA"/>
</dbReference>
<dbReference type="EMBL" id="AK153476">
    <property type="protein sequence ID" value="BAE32026.1"/>
    <property type="molecule type" value="mRNA"/>
</dbReference>
<dbReference type="EMBL" id="BC003716">
    <property type="protein sequence ID" value="AAH03716.1"/>
    <property type="molecule type" value="mRNA"/>
</dbReference>
<dbReference type="CCDS" id="CCDS38416.1"/>
<dbReference type="RefSeq" id="NP_033803.1">
    <property type="nucleotide sequence ID" value="NM_009673.2"/>
</dbReference>
<dbReference type="SMR" id="P48036"/>
<dbReference type="BioGRID" id="198111">
    <property type="interactions" value="11"/>
</dbReference>
<dbReference type="FunCoup" id="P48036">
    <property type="interactions" value="1087"/>
</dbReference>
<dbReference type="IntAct" id="P48036">
    <property type="interactions" value="6"/>
</dbReference>
<dbReference type="MINT" id="P48036"/>
<dbReference type="STRING" id="10090.ENSMUSP00000029266"/>
<dbReference type="GlyGen" id="P48036">
    <property type="glycosylation" value="1 site, 1 O-linked glycan (1 site)"/>
</dbReference>
<dbReference type="iPTMnet" id="P48036"/>
<dbReference type="MetOSite" id="P48036"/>
<dbReference type="PhosphoSitePlus" id="P48036"/>
<dbReference type="SwissPalm" id="P48036"/>
<dbReference type="REPRODUCTION-2DPAGE" id="IPI00317309"/>
<dbReference type="CPTAC" id="non-CPTAC-3687"/>
<dbReference type="CPTAC" id="non-CPTAC-4015"/>
<dbReference type="jPOST" id="P48036"/>
<dbReference type="PaxDb" id="10090-ENSMUSP00000029266"/>
<dbReference type="PeptideAtlas" id="P48036"/>
<dbReference type="ProteomicsDB" id="282128"/>
<dbReference type="TopDownProteomics" id="P48036"/>
<dbReference type="Antibodypedia" id="3290">
    <property type="antibodies" value="783 antibodies from 45 providers"/>
</dbReference>
<dbReference type="DNASU" id="11747"/>
<dbReference type="Ensembl" id="ENSMUST00000029266.14">
    <property type="protein sequence ID" value="ENSMUSP00000029266.9"/>
    <property type="gene ID" value="ENSMUSG00000027712.14"/>
</dbReference>
<dbReference type="GeneID" id="11747"/>
<dbReference type="KEGG" id="mmu:11747"/>
<dbReference type="UCSC" id="uc008ozj.2">
    <property type="organism name" value="mouse"/>
</dbReference>
<dbReference type="AGR" id="MGI:106008"/>
<dbReference type="CTD" id="308"/>
<dbReference type="MGI" id="MGI:106008">
    <property type="gene designation" value="Anxa5"/>
</dbReference>
<dbReference type="VEuPathDB" id="HostDB:ENSMUSG00000027712"/>
<dbReference type="eggNOG" id="KOG0819">
    <property type="taxonomic scope" value="Eukaryota"/>
</dbReference>
<dbReference type="GeneTree" id="ENSGT00940000155988"/>
<dbReference type="HOGENOM" id="CLU_025300_0_0_1"/>
<dbReference type="InParanoid" id="P48036"/>
<dbReference type="OMA" id="LQGNRDP"/>
<dbReference type="OrthoDB" id="37886at2759"/>
<dbReference type="PhylomeDB" id="P48036"/>
<dbReference type="TreeFam" id="TF105452"/>
<dbReference type="Reactome" id="R-MMU-114608">
    <property type="pathway name" value="Platelet degranulation"/>
</dbReference>
<dbReference type="BioGRID-ORCS" id="11747">
    <property type="hits" value="3 hits in 77 CRISPR screens"/>
</dbReference>
<dbReference type="ChiTaRS" id="Anxa5">
    <property type="organism name" value="mouse"/>
</dbReference>
<dbReference type="PRO" id="PR:P48036"/>
<dbReference type="Proteomes" id="UP000000589">
    <property type="component" value="Chromosome 3"/>
</dbReference>
<dbReference type="RNAct" id="P48036">
    <property type="molecule type" value="protein"/>
</dbReference>
<dbReference type="Bgee" id="ENSMUSG00000027712">
    <property type="expression patterns" value="Expressed in utricle of membranous labyrinth and 271 other cell types or tissues"/>
</dbReference>
<dbReference type="ExpressionAtlas" id="P48036">
    <property type="expression patterns" value="baseline and differential"/>
</dbReference>
<dbReference type="GO" id="GO:0062023">
    <property type="term" value="C:collagen-containing extracellular matrix"/>
    <property type="evidence" value="ECO:0007005"/>
    <property type="project" value="BHF-UCL"/>
</dbReference>
<dbReference type="GO" id="GO:0072563">
    <property type="term" value="C:endothelial microparticle"/>
    <property type="evidence" value="ECO:0000314"/>
    <property type="project" value="BHF-UCL"/>
</dbReference>
<dbReference type="GO" id="GO:0009897">
    <property type="term" value="C:external side of plasma membrane"/>
    <property type="evidence" value="ECO:0000314"/>
    <property type="project" value="MGI"/>
</dbReference>
<dbReference type="GO" id="GO:0005509">
    <property type="term" value="F:calcium ion binding"/>
    <property type="evidence" value="ECO:0007669"/>
    <property type="project" value="InterPro"/>
</dbReference>
<dbReference type="GO" id="GO:0005544">
    <property type="term" value="F:calcium-dependent phospholipid binding"/>
    <property type="evidence" value="ECO:0007669"/>
    <property type="project" value="UniProtKB-KW"/>
</dbReference>
<dbReference type="GO" id="GO:0001786">
    <property type="term" value="F:phosphatidylserine binding"/>
    <property type="evidence" value="ECO:0000314"/>
    <property type="project" value="MGI"/>
</dbReference>
<dbReference type="GO" id="GO:0007596">
    <property type="term" value="P:blood coagulation"/>
    <property type="evidence" value="ECO:0007669"/>
    <property type="project" value="UniProtKB-KW"/>
</dbReference>
<dbReference type="GO" id="GO:0050819">
    <property type="term" value="P:negative regulation of coagulation"/>
    <property type="evidence" value="ECO:0007669"/>
    <property type="project" value="InterPro"/>
</dbReference>
<dbReference type="FunFam" id="1.10.220.10:FF:000002">
    <property type="entry name" value="Annexin"/>
    <property type="match status" value="1"/>
</dbReference>
<dbReference type="FunFam" id="1.10.220.10:FF:000003">
    <property type="entry name" value="Annexin"/>
    <property type="match status" value="1"/>
</dbReference>
<dbReference type="FunFam" id="1.10.220.10:FF:000004">
    <property type="entry name" value="Annexin"/>
    <property type="match status" value="1"/>
</dbReference>
<dbReference type="FunFam" id="1.10.220.10:FF:000022">
    <property type="entry name" value="Annexin A5"/>
    <property type="match status" value="1"/>
</dbReference>
<dbReference type="Gene3D" id="1.10.220.10">
    <property type="entry name" value="Annexin"/>
    <property type="match status" value="4"/>
</dbReference>
<dbReference type="InterPro" id="IPR001464">
    <property type="entry name" value="Annexin"/>
</dbReference>
<dbReference type="InterPro" id="IPR018502">
    <property type="entry name" value="Annexin_repeat"/>
</dbReference>
<dbReference type="InterPro" id="IPR018252">
    <property type="entry name" value="Annexin_repeat_CS"/>
</dbReference>
<dbReference type="InterPro" id="IPR037104">
    <property type="entry name" value="Annexin_sf"/>
</dbReference>
<dbReference type="InterPro" id="IPR002392">
    <property type="entry name" value="ANX5"/>
</dbReference>
<dbReference type="PANTHER" id="PTHR10502">
    <property type="entry name" value="ANNEXIN"/>
    <property type="match status" value="1"/>
</dbReference>
<dbReference type="PANTHER" id="PTHR10502:SF26">
    <property type="entry name" value="ANNEXIN A5"/>
    <property type="match status" value="1"/>
</dbReference>
<dbReference type="Pfam" id="PF00191">
    <property type="entry name" value="Annexin"/>
    <property type="match status" value="4"/>
</dbReference>
<dbReference type="PRINTS" id="PR00196">
    <property type="entry name" value="ANNEXIN"/>
</dbReference>
<dbReference type="PRINTS" id="PR00201">
    <property type="entry name" value="ANNEXINV"/>
</dbReference>
<dbReference type="SMART" id="SM00335">
    <property type="entry name" value="ANX"/>
    <property type="match status" value="4"/>
</dbReference>
<dbReference type="SUPFAM" id="SSF47874">
    <property type="entry name" value="Annexin"/>
    <property type="match status" value="1"/>
</dbReference>
<dbReference type="PROSITE" id="PS00223">
    <property type="entry name" value="ANNEXIN_1"/>
    <property type="match status" value="4"/>
</dbReference>
<dbReference type="PROSITE" id="PS51897">
    <property type="entry name" value="ANNEXIN_2"/>
    <property type="match status" value="4"/>
</dbReference>